<protein>
    <recommendedName>
        <fullName>Esterase</fullName>
        <ecNumber>3.1.1.-</ecNumber>
    </recommendedName>
</protein>
<reference key="1">
    <citation type="journal article" date="1990" name="J. Bacteriol.">
        <title>Cloning, sequencing, and regulation of expression of an extracellular esterase gene from the plant pathogen Streptomyces scabies.</title>
        <authorList>
            <person name="Raymer G."/>
            <person name="Willard J.M.A."/>
            <person name="Schottel J.L."/>
        </authorList>
    </citation>
    <scope>NUCLEOTIDE SEQUENCE [GENOMIC DNA]</scope>
    <scope>PROTEIN SEQUENCE OF 40-69</scope>
    <source>
        <strain>FL1</strain>
    </source>
</reference>
<reference key="2">
    <citation type="journal article" date="1992" name="Gene">
        <title>Regulation and secretion of an extracellular esterase from Streptomyces scabies.</title>
        <authorList>
            <person name="Schottel J.L."/>
            <person name="Hale V."/>
            <person name="Babcock M.J."/>
        </authorList>
    </citation>
    <scope>SUBCELLULAR LOCATION</scope>
</reference>
<reference key="3">
    <citation type="journal article" date="1995" name="Nat. Struct. Biol.">
        <title>A novel variant of the catalytic triad in the Streptomyces scabies esterase.</title>
        <authorList>
            <person name="Wei Y."/>
            <person name="Schottel J.L."/>
            <person name="Derewenda U."/>
            <person name="Swenson L."/>
            <person name="Patkar S."/>
            <person name="Derewenda Z.S."/>
        </authorList>
    </citation>
    <scope>X-RAY CRYSTALLOGRAPHY (2.1 ANGSTROMS)</scope>
</reference>
<proteinExistence type="evidence at protein level"/>
<organism>
    <name type="scientific">Streptomyces scabiei</name>
    <dbReference type="NCBI Taxonomy" id="1930"/>
    <lineage>
        <taxon>Bacteria</taxon>
        <taxon>Bacillati</taxon>
        <taxon>Actinomycetota</taxon>
        <taxon>Actinomycetes</taxon>
        <taxon>Kitasatosporales</taxon>
        <taxon>Streptomycetaceae</taxon>
        <taxon>Streptomyces</taxon>
    </lineage>
</organism>
<evidence type="ECO:0000269" key="1">
    <source>
    </source>
</evidence>
<evidence type="ECO:0000269" key="2">
    <source>
    </source>
</evidence>
<evidence type="ECO:0000305" key="3"/>
<evidence type="ECO:0007829" key="4">
    <source>
        <dbReference type="PDB" id="1ESC"/>
    </source>
</evidence>
<evidence type="ECO:0007829" key="5">
    <source>
        <dbReference type="PDB" id="1ESD"/>
    </source>
</evidence>
<evidence type="ECO:0007829" key="6">
    <source>
        <dbReference type="PDB" id="1ESE"/>
    </source>
</evidence>
<sequence length="345" mass="36670">MSSAMRKTTNSPVVRRLTAAAVALGSCLALAGPAGSAGAAPADPVPTVFFGDSYTANFGIAPVTNQDSERGWCFQAKENYPAVATRSLADKGITLDVQADVSCGGALIHHFWEKQELPFGAGELPPQQDALKQDTQLTVGSLGGNTLGFNRILKQCSDELRKPSLLPGDPVDGDEPAAKCGEFFGTGDGKQWLDDQFERVGAELEELLDRIGYFAPDAKRVLVGYPRLVPEDTTKCLTAAPGQTQLPFADIPQDALPVLDQIQKRLNDAMKKAAADGGADFVDLYAGTGANTACDGADRGIGGLLEDSQLELLGTKIPWYAHPNDKGRDIQAKQVADKIEEILNR</sequence>
<accession>P22266</accession>
<dbReference type="EC" id="3.1.1.-"/>
<dbReference type="EMBL" id="M57297">
    <property type="protein sequence ID" value="AAA26743.1"/>
    <property type="molecule type" value="Genomic_DNA"/>
</dbReference>
<dbReference type="EMBL" id="M57297">
    <property type="protein sequence ID" value="AAA26744.1"/>
    <property type="status" value="ALT_INIT"/>
    <property type="molecule type" value="Genomic_DNA"/>
</dbReference>
<dbReference type="PIR" id="A37845">
    <property type="entry name" value="A37845"/>
</dbReference>
<dbReference type="PDB" id="1ESC">
    <property type="method" value="X-ray"/>
    <property type="resolution" value="2.10 A"/>
    <property type="chains" value="A=40-345"/>
</dbReference>
<dbReference type="PDB" id="1ESD">
    <property type="method" value="X-ray"/>
    <property type="resolution" value="2.30 A"/>
    <property type="chains" value="A=40-345"/>
</dbReference>
<dbReference type="PDB" id="1ESE">
    <property type="method" value="X-ray"/>
    <property type="resolution" value="2.40 A"/>
    <property type="chains" value="A=40-345"/>
</dbReference>
<dbReference type="PDBsum" id="1ESC"/>
<dbReference type="PDBsum" id="1ESD"/>
<dbReference type="PDBsum" id="1ESE"/>
<dbReference type="SMR" id="P22266"/>
<dbReference type="DrugBank" id="DB02845">
    <property type="generic name" value="Methylphosphinic Acid"/>
</dbReference>
<dbReference type="EvolutionaryTrace" id="P22266"/>
<dbReference type="GO" id="GO:0005576">
    <property type="term" value="C:extracellular region"/>
    <property type="evidence" value="ECO:0007669"/>
    <property type="project" value="UniProtKB-SubCell"/>
</dbReference>
<dbReference type="GO" id="GO:0052689">
    <property type="term" value="F:carboxylic ester hydrolase activity"/>
    <property type="evidence" value="ECO:0007669"/>
    <property type="project" value="UniProtKB-KW"/>
</dbReference>
<dbReference type="GO" id="GO:0006629">
    <property type="term" value="P:lipid metabolic process"/>
    <property type="evidence" value="ECO:0007669"/>
    <property type="project" value="TreeGrafter"/>
</dbReference>
<dbReference type="CDD" id="cd01823">
    <property type="entry name" value="SEST_like"/>
    <property type="match status" value="1"/>
</dbReference>
<dbReference type="Gene3D" id="3.40.50.1110">
    <property type="entry name" value="SGNH hydrolase"/>
    <property type="match status" value="1"/>
</dbReference>
<dbReference type="InterPro" id="IPR037460">
    <property type="entry name" value="SEST-like"/>
</dbReference>
<dbReference type="InterPro" id="IPR013830">
    <property type="entry name" value="SGNH_hydro"/>
</dbReference>
<dbReference type="InterPro" id="IPR036514">
    <property type="entry name" value="SGNH_hydro_sf"/>
</dbReference>
<dbReference type="PANTHER" id="PTHR37981">
    <property type="entry name" value="LIPASE 2"/>
    <property type="match status" value="1"/>
</dbReference>
<dbReference type="PANTHER" id="PTHR37981:SF1">
    <property type="entry name" value="SGNH HYDROLASE-TYPE ESTERASE DOMAIN-CONTAINING PROTEIN"/>
    <property type="match status" value="1"/>
</dbReference>
<dbReference type="Pfam" id="PF13472">
    <property type="entry name" value="Lipase_GDSL_2"/>
    <property type="match status" value="1"/>
</dbReference>
<dbReference type="SUPFAM" id="SSF52266">
    <property type="entry name" value="SGNH hydrolase"/>
    <property type="match status" value="1"/>
</dbReference>
<keyword id="KW-0002">3D-structure</keyword>
<keyword id="KW-0903">Direct protein sequencing</keyword>
<keyword id="KW-1015">Disulfide bond</keyword>
<keyword id="KW-0378">Hydrolase</keyword>
<keyword id="KW-0964">Secreted</keyword>
<keyword id="KW-0719">Serine esterase</keyword>
<keyword id="KW-0732">Signal</keyword>
<gene>
    <name type="primary">estA</name>
</gene>
<comment type="subcellular location">
    <subcellularLocation>
        <location evidence="1">Secreted</location>
    </subcellularLocation>
</comment>
<comment type="induction">
    <text>By zinc.</text>
</comment>
<comment type="caution">
    <text evidence="3">It is uncertain whether Met-1 or Met-5 is the initiator.</text>
</comment>
<comment type="sequence caution" evidence="3">
    <conflict type="erroneous initiation">
        <sequence resource="EMBL-CDS" id="AAA26744"/>
    </conflict>
</comment>
<name>ESTA_STRSC</name>
<feature type="signal peptide" evidence="2">
    <location>
        <begin position="1"/>
        <end position="39"/>
    </location>
</feature>
<feature type="chain" id="PRO_0000021208" description="Esterase">
    <location>
        <begin position="40"/>
        <end position="345"/>
    </location>
</feature>
<feature type="disulfide bond">
    <location>
        <begin position="73"/>
        <end position="103"/>
    </location>
</feature>
<feature type="disulfide bond">
    <location>
        <begin position="156"/>
        <end position="180"/>
    </location>
</feature>
<feature type="disulfide bond">
    <location>
        <begin position="236"/>
        <end position="294"/>
    </location>
</feature>
<feature type="strand" evidence="4">
    <location>
        <begin position="44"/>
        <end position="49"/>
    </location>
</feature>
<feature type="helix" evidence="4">
    <location>
        <begin position="53"/>
        <end position="56"/>
    </location>
</feature>
<feature type="turn" evidence="4">
    <location>
        <begin position="57"/>
        <end position="59"/>
    </location>
</feature>
<feature type="strand" evidence="4">
    <location>
        <begin position="61"/>
        <end position="63"/>
    </location>
</feature>
<feature type="turn" evidence="4">
    <location>
        <begin position="64"/>
        <end position="67"/>
    </location>
</feature>
<feature type="helix" evidence="4">
    <location>
        <begin position="69"/>
        <end position="73"/>
    </location>
</feature>
<feature type="helix" evidence="4">
    <location>
        <begin position="80"/>
        <end position="89"/>
    </location>
</feature>
<feature type="turn" evidence="4">
    <location>
        <begin position="90"/>
        <end position="92"/>
    </location>
</feature>
<feature type="strand" evidence="4">
    <location>
        <begin position="94"/>
        <end position="100"/>
    </location>
</feature>
<feature type="helix" evidence="4">
    <location>
        <begin position="108"/>
        <end position="111"/>
    </location>
</feature>
<feature type="strand" evidence="5">
    <location>
        <begin position="115"/>
        <end position="117"/>
    </location>
</feature>
<feature type="helix" evidence="4">
    <location>
        <begin position="118"/>
        <end position="120"/>
    </location>
</feature>
<feature type="strand" evidence="5">
    <location>
        <begin position="122"/>
        <end position="124"/>
    </location>
</feature>
<feature type="helix" evidence="4">
    <location>
        <begin position="127"/>
        <end position="130"/>
    </location>
</feature>
<feature type="strand" evidence="4">
    <location>
        <begin position="137"/>
        <end position="140"/>
    </location>
</feature>
<feature type="helix" evidence="4">
    <location>
        <begin position="144"/>
        <end position="147"/>
    </location>
</feature>
<feature type="helix" evidence="4">
    <location>
        <begin position="149"/>
        <end position="155"/>
    </location>
</feature>
<feature type="turn" evidence="4">
    <location>
        <begin position="158"/>
        <end position="161"/>
    </location>
</feature>
<feature type="strand" evidence="6">
    <location>
        <begin position="171"/>
        <end position="175"/>
    </location>
</feature>
<feature type="helix" evidence="4">
    <location>
        <begin position="177"/>
        <end position="179"/>
    </location>
</feature>
<feature type="helix" evidence="4">
    <location>
        <begin position="180"/>
        <end position="183"/>
    </location>
</feature>
<feature type="turn" evidence="4">
    <location>
        <begin position="184"/>
        <end position="186"/>
    </location>
</feature>
<feature type="helix" evidence="4">
    <location>
        <begin position="188"/>
        <end position="214"/>
    </location>
</feature>
<feature type="strand" evidence="4">
    <location>
        <begin position="219"/>
        <end position="223"/>
    </location>
</feature>
<feature type="helix" evidence="4">
    <location>
        <begin position="233"/>
        <end position="237"/>
    </location>
</feature>
<feature type="turn" evidence="4">
    <location>
        <begin position="247"/>
        <end position="250"/>
    </location>
</feature>
<feature type="turn" evidence="4">
    <location>
        <begin position="253"/>
        <end position="255"/>
    </location>
</feature>
<feature type="helix" evidence="4">
    <location>
        <begin position="256"/>
        <end position="275"/>
    </location>
</feature>
<feature type="turn" evidence="4">
    <location>
        <begin position="276"/>
        <end position="278"/>
    </location>
</feature>
<feature type="strand" evidence="4">
    <location>
        <begin position="280"/>
        <end position="282"/>
    </location>
</feature>
<feature type="helix" evidence="4">
    <location>
        <begin position="285"/>
        <end position="287"/>
    </location>
</feature>
<feature type="strand" evidence="4">
    <location>
        <begin position="304"/>
        <end position="314"/>
    </location>
</feature>
<feature type="strand" evidence="4">
    <location>
        <begin position="316"/>
        <end position="318"/>
    </location>
</feature>
<feature type="helix" evidence="4">
    <location>
        <begin position="325"/>
        <end position="342"/>
    </location>
</feature>